<accession>Q8TE58</accession>
<accession>Q32MI6</accession>
<sequence>MLLLGILTLAFAGRTAGGSEPEREVVVPIRLDPDINGRRYYWRGPEDSGDQGLIFQITAFQEDFYLHLTPDAQFLAPAFSTEHLGVPLQGLTGGSSDLRRCFYSGDVNAEPDSFAAVSLCGGLRGAFGYRGAEYVISPLPNASAPAAQRNSQGAHLLQRRGVPGGPSGDPTSRCGVASGWNPAILRALDPYKPRRAGFGESRSRRRSGRAKRFVSIPRYVETLVVADESMVKFHGADLEHYLLTLLATAARLYRHPSILNPINIVVVKVLLLRDRDSGPKVTGNAALTLRNFCAWQKKLNKVSDKHPEYWDTAILFTRQDLCGATTCDTLGMADVGTMCDPKRSCSVIEDDGLPSAFTTAHELGHVFNMPHDNVKVCEEVFGKLRANHMMSPTLIQIDRANPWSACSAAIITDFLDSGHGDCLLDQPSKPISLPEDLPGASYTLSQQCELAFGVGSKPCPYMQYCTKLWCTGKAKGQMVCQTRHFPWADGTSCGEGKLCLKGACVERHNLNKHRVDGSWAKWDPYGPCSRTCGGGVQLARRQCTNPTPANGGKYCEGVRVKYRSCNLEPCPSSASGKSFREEQCEAFNGYNHSTNRLTLAVAWVPKYSGVSPRDKCKLICRANGTGYFYVLAPKVVDGTLCSPDSTSVCVQGKCIKAGCDGNLGSKKRFDKCGVCGGDNKSCKKVTGLFTKPMHGYNFVVAIPAGASSIDIRQRGYKGLIGDDNYLALKNSQGKYLLNGHFVVSAVERDLVVKGSLLRYSGTGTAVESLQASRPILEPLTVEVLSVGKMTPPRVRYSFYLPKEPREDKSSHPKDPRGPSVLHNSVLSLSNQVEQPDDRPPARWVAGSWGPCSASCGSGLQKRAVDCRGSAGQRTVPACDAAHRPVETQACGEPCPTWELSAWSPCSKSCGRGFQRRSLKCVGHGGRLLARDQCNLHRKPQELDFCVLRPC</sequence>
<evidence type="ECO:0000250" key="1"/>
<evidence type="ECO:0000250" key="2">
    <source>
        <dbReference type="UniProtKB" id="P59384"/>
    </source>
</evidence>
<evidence type="ECO:0000250" key="3">
    <source>
        <dbReference type="UniProtKB" id="Q76LX8"/>
    </source>
</evidence>
<evidence type="ECO:0000250" key="4">
    <source>
        <dbReference type="UniProtKB" id="Q9UHI8"/>
    </source>
</evidence>
<evidence type="ECO:0000250" key="5">
    <source>
        <dbReference type="UniProtKB" id="Q9UNA0"/>
    </source>
</evidence>
<evidence type="ECO:0000255" key="6"/>
<evidence type="ECO:0000255" key="7">
    <source>
        <dbReference type="PROSITE-ProRule" id="PRU00210"/>
    </source>
</evidence>
<evidence type="ECO:0000255" key="8">
    <source>
        <dbReference type="PROSITE-ProRule" id="PRU00276"/>
    </source>
</evidence>
<evidence type="ECO:0000255" key="9">
    <source>
        <dbReference type="PROSITE-ProRule" id="PRU10095"/>
    </source>
</evidence>
<evidence type="ECO:0000256" key="10">
    <source>
        <dbReference type="SAM" id="MobiDB-lite"/>
    </source>
</evidence>
<evidence type="ECO:0000269" key="11">
    <source>
    </source>
</evidence>
<evidence type="ECO:0000269" key="12">
    <source>
    </source>
</evidence>
<evidence type="ECO:0000269" key="13">
    <source>
    </source>
</evidence>
<protein>
    <recommendedName>
        <fullName>A disintegrin and metalloproteinase with thrombospondin motifs 15</fullName>
        <shortName>ADAM-TS 15</shortName>
        <shortName>ADAM-TS15</shortName>
        <shortName>ADAMTS-15</shortName>
        <ecNumber>3.4.24.-</ecNumber>
    </recommendedName>
</protein>
<reference key="1">
    <citation type="journal article" date="2002" name="Gene">
        <title>Cloning, expression analysis, and structural characterization of seven novel human ADAMTSs, a family of metalloproteinases with disintegrin and thrombospondin-1 domains.</title>
        <authorList>
            <person name="Cal S."/>
            <person name="Obaya A.J."/>
            <person name="Llamazares M."/>
            <person name="Garabaya C."/>
            <person name="Quesada V."/>
            <person name="Lopez-Otin C."/>
        </authorList>
    </citation>
    <scope>NUCLEOTIDE SEQUENCE [MRNA]</scope>
    <scope>TISSUE SPECIFICITY</scope>
</reference>
<reference key="2">
    <citation type="journal article" date="2004" name="Genome Res.">
        <title>The status, quality, and expansion of the NIH full-length cDNA project: the Mammalian Gene Collection (MGC).</title>
        <authorList>
            <consortium name="The MGC Project Team"/>
        </authorList>
    </citation>
    <scope>NUCLEOTIDE SEQUENCE [LARGE SCALE MRNA]</scope>
</reference>
<reference key="3">
    <citation type="journal article" date="2006" name="Science">
        <title>The consensus coding sequences of human breast and colorectal cancers.</title>
        <authorList>
            <person name="Sjoeblom T."/>
            <person name="Jones S."/>
            <person name="Wood L.D."/>
            <person name="Parsons D.W."/>
            <person name="Lin J."/>
            <person name="Barber T.D."/>
            <person name="Mandelker D."/>
            <person name="Leary R.J."/>
            <person name="Ptak J."/>
            <person name="Silliman N."/>
            <person name="Szabo S."/>
            <person name="Buckhaults P."/>
            <person name="Farrell C."/>
            <person name="Meeh P."/>
            <person name="Markowitz S.D."/>
            <person name="Willis J."/>
            <person name="Dawson D."/>
            <person name="Willson J.K.V."/>
            <person name="Gazdar A.F."/>
            <person name="Hartigan J."/>
            <person name="Wu L."/>
            <person name="Liu C."/>
            <person name="Parmigiani G."/>
            <person name="Park B.H."/>
            <person name="Bachman K.E."/>
            <person name="Papadopoulos N."/>
            <person name="Vogelstein B."/>
            <person name="Kinzler K.W."/>
            <person name="Velculescu V.E."/>
        </authorList>
    </citation>
    <scope>VARIANTS [LARGE SCALE ANALYSIS] ARG-770 AND GLY-878</scope>
</reference>
<reference key="4">
    <citation type="journal article" date="2022" name="Genet. Med.">
        <title>Biallelic variants in ADAMTS15 cause a novel form of distal arthrogryposis.</title>
        <authorList>
            <person name="Boschann F."/>
            <person name="Cogulu M.O."/>
            <person name="Pehlivan D."/>
            <person name="Balachandran S."/>
            <person name="Vallecillo-Garcia P."/>
            <person name="Grochowski C.M."/>
            <person name="Hansmeier N.R."/>
            <person name="Coban Akdemir Z.H."/>
            <person name="Prada-Medina C.A."/>
            <person name="Aykut A."/>
            <person name="Fischer-Zirnsak B."/>
            <person name="Badura S."/>
            <person name="Durmaz B."/>
            <person name="Ozkinay F."/>
            <person name="Haegerling R."/>
            <person name="Posey J.E."/>
            <person name="Stricker S."/>
            <person name="Gillessen-Kaesbach G."/>
            <person name="Spielmann M."/>
            <person name="Horn D."/>
            <person name="Brockmann K."/>
            <person name="Lupski J.R."/>
            <person name="Kornak U."/>
            <person name="Schmidt J."/>
        </authorList>
    </citation>
    <scope>VARIANTS DA12 41-TYR--CYS-950 DEL; SER-761 AND TRP-905</scope>
    <scope>INVOLVEMENT IN DA12</scope>
</reference>
<reference key="5">
    <citation type="journal article" date="2023" name="Genet. Med.">
        <authorList>
            <person name="Boschann F."/>
            <person name="Cogulu O."/>
            <person name="Pehlivan D."/>
            <person name="Balachandran S."/>
            <person name="Vallecillo-Garcia P."/>
            <person name="Grochowski C.M."/>
            <person name="Hansmeier N.R."/>
            <person name="Coban Akdemir Z.H."/>
            <person name="Prada-Medina C.A."/>
            <person name="Aykut A."/>
            <person name="Fischer-Zirnsak B."/>
            <person name="Badura S."/>
            <person name="Durmaz B."/>
            <person name="Ozkinay F."/>
            <person name="Haegerling R."/>
            <person name="Posey J.E."/>
            <person name="Stricker S."/>
            <person name="Gillessen-Kaesbach G."/>
            <person name="Spielmann M."/>
            <person name="Horn D."/>
            <person name="Brockmann K."/>
            <person name="Lupski J.R."/>
            <person name="Kornak U."/>
            <person name="Schmidt J."/>
        </authorList>
    </citation>
    <scope>ERRATUM OF PUBMED:35962790</scope>
</reference>
<keyword id="KW-0165">Cleavage on pair of basic residues</keyword>
<keyword id="KW-0225">Disease variant</keyword>
<keyword id="KW-1015">Disulfide bond</keyword>
<keyword id="KW-0272">Extracellular matrix</keyword>
<keyword id="KW-0325">Glycoprotein</keyword>
<keyword id="KW-0378">Hydrolase</keyword>
<keyword id="KW-0479">Metal-binding</keyword>
<keyword id="KW-0482">Metalloprotease</keyword>
<keyword id="KW-0645">Protease</keyword>
<keyword id="KW-1267">Proteomics identification</keyword>
<keyword id="KW-1185">Reference proteome</keyword>
<keyword id="KW-0677">Repeat</keyword>
<keyword id="KW-0964">Secreted</keyword>
<keyword id="KW-0732">Signal</keyword>
<keyword id="KW-0862">Zinc</keyword>
<keyword id="KW-0865">Zymogen</keyword>
<gene>
    <name type="primary">ADAMTS15</name>
</gene>
<organism>
    <name type="scientific">Homo sapiens</name>
    <name type="common">Human</name>
    <dbReference type="NCBI Taxonomy" id="9606"/>
    <lineage>
        <taxon>Eukaryota</taxon>
        <taxon>Metazoa</taxon>
        <taxon>Chordata</taxon>
        <taxon>Craniata</taxon>
        <taxon>Vertebrata</taxon>
        <taxon>Euteleostomi</taxon>
        <taxon>Mammalia</taxon>
        <taxon>Eutheria</taxon>
        <taxon>Euarchontoglires</taxon>
        <taxon>Primates</taxon>
        <taxon>Haplorrhini</taxon>
        <taxon>Catarrhini</taxon>
        <taxon>Hominidae</taxon>
        <taxon>Homo</taxon>
    </lineage>
</organism>
<name>ATS15_HUMAN</name>
<proteinExistence type="evidence at protein level"/>
<feature type="signal peptide" evidence="6">
    <location>
        <begin position="1"/>
        <end position="17"/>
    </location>
</feature>
<feature type="propeptide" id="PRO_0000029192" evidence="2">
    <location>
        <begin position="18"/>
        <end position="212"/>
    </location>
</feature>
<feature type="chain" id="PRO_0000029193" description="A disintegrin and metalloproteinase with thrombospondin motifs 15">
    <location>
        <begin position="213"/>
        <end position="950"/>
    </location>
</feature>
<feature type="domain" description="Peptidase M12B" evidence="8">
    <location>
        <begin position="218"/>
        <end position="427"/>
    </location>
</feature>
<feature type="domain" description="Disintegrin">
    <location>
        <begin position="428"/>
        <end position="515"/>
    </location>
</feature>
<feature type="domain" description="TSP type-1 1" evidence="7">
    <location>
        <begin position="516"/>
        <end position="571"/>
    </location>
</feature>
<feature type="domain" description="TSP type-1 2" evidence="7">
    <location>
        <begin position="839"/>
        <end position="895"/>
    </location>
</feature>
<feature type="domain" description="TSP type-1 3" evidence="7">
    <location>
        <begin position="896"/>
        <end position="949"/>
    </location>
</feature>
<feature type="region of interest" description="Disordered" evidence="10">
    <location>
        <begin position="151"/>
        <end position="172"/>
    </location>
</feature>
<feature type="region of interest" description="Spacer">
    <location>
        <begin position="701"/>
        <end position="838"/>
    </location>
</feature>
<feature type="region of interest" description="Disordered" evidence="10">
    <location>
        <begin position="798"/>
        <end position="822"/>
    </location>
</feature>
<feature type="short sequence motif" description="Cysteine switch" evidence="1">
    <location>
        <begin position="172"/>
        <end position="179"/>
    </location>
</feature>
<feature type="compositionally biased region" description="Basic and acidic residues" evidence="10">
    <location>
        <begin position="802"/>
        <end position="816"/>
    </location>
</feature>
<feature type="active site" evidence="8 9">
    <location>
        <position position="362"/>
    </location>
</feature>
<feature type="binding site" description="in inhibited form" evidence="1">
    <location>
        <position position="174"/>
    </location>
    <ligand>
        <name>Zn(2+)</name>
        <dbReference type="ChEBI" id="CHEBI:29105"/>
        <note>catalytic</note>
    </ligand>
</feature>
<feature type="binding site" evidence="1">
    <location>
        <position position="361"/>
    </location>
    <ligand>
        <name>Zn(2+)</name>
        <dbReference type="ChEBI" id="CHEBI:29105"/>
        <note>catalytic</note>
    </ligand>
</feature>
<feature type="binding site" evidence="1">
    <location>
        <position position="365"/>
    </location>
    <ligand>
        <name>Zn(2+)</name>
        <dbReference type="ChEBI" id="CHEBI:29105"/>
        <note>catalytic</note>
    </ligand>
</feature>
<feature type="binding site" evidence="1">
    <location>
        <position position="371"/>
    </location>
    <ligand>
        <name>Zn(2+)</name>
        <dbReference type="ChEBI" id="CHEBI:29105"/>
        <note>catalytic</note>
    </ligand>
</feature>
<feature type="glycosylation site" description="N-linked (GlcNAc...) asparagine" evidence="6">
    <location>
        <position position="141"/>
    </location>
</feature>
<feature type="glycosylation site" description="N-linked (GlcNAc...) asparagine" evidence="6">
    <location>
        <position position="591"/>
    </location>
</feature>
<feature type="glycosylation site" description="N-linked (GlcNAc...) asparagine" evidence="6">
    <location>
        <position position="623"/>
    </location>
</feature>
<feature type="glycosylation site" description="N-linked (GlcNAc...) asparagine" evidence="6">
    <location>
        <position position="679"/>
    </location>
</feature>
<feature type="disulfide bond" evidence="5">
    <location>
        <begin position="293"/>
        <end position="345"/>
    </location>
</feature>
<feature type="disulfide bond" evidence="5">
    <location>
        <begin position="322"/>
        <end position="327"/>
    </location>
</feature>
<feature type="disulfide bond" evidence="5">
    <location>
        <begin position="339"/>
        <end position="422"/>
    </location>
</feature>
<feature type="disulfide bond" evidence="5">
    <location>
        <begin position="377"/>
        <end position="406"/>
    </location>
</feature>
<feature type="disulfide bond" evidence="5">
    <location>
        <begin position="448"/>
        <end position="470"/>
    </location>
</feature>
<feature type="disulfide bond" evidence="5">
    <location>
        <begin position="459"/>
        <end position="480"/>
    </location>
</feature>
<feature type="disulfide bond" evidence="5">
    <location>
        <begin position="465"/>
        <end position="499"/>
    </location>
</feature>
<feature type="disulfide bond" evidence="5">
    <location>
        <begin position="493"/>
        <end position="504"/>
    </location>
</feature>
<feature type="disulfide bond" evidence="7">
    <location>
        <begin position="528"/>
        <end position="565"/>
    </location>
</feature>
<feature type="disulfide bond" evidence="7">
    <location>
        <begin position="532"/>
        <end position="570"/>
    </location>
</feature>
<feature type="disulfide bond" evidence="7">
    <location>
        <begin position="543"/>
        <end position="555"/>
    </location>
</feature>
<feature type="sequence variant" id="VAR_089063" description="In DA12; likely pathogenic." evidence="13">
    <location>
        <begin position="41"/>
        <end position="950"/>
    </location>
</feature>
<feature type="sequence variant" id="VAR_051594" description="In dbSNP:rs11222114.">
    <original>N</original>
    <variation>S</variation>
    <location>
        <position position="623"/>
    </location>
</feature>
<feature type="sequence variant" id="VAR_089064" description="In DA12; uncertain significance; dbSNP:rs754451064." evidence="13">
    <original>G</original>
    <variation>S</variation>
    <location>
        <position position="761"/>
    </location>
</feature>
<feature type="sequence variant" id="VAR_036150" description="In a colorectal cancer sample; somatic mutation; dbSNP:rs776537988." evidence="12">
    <original>Q</original>
    <variation>R</variation>
    <location>
        <position position="770"/>
    </location>
</feature>
<feature type="sequence variant" id="VAR_036151" description="In a colorectal cancer sample; somatic mutation." evidence="12">
    <original>C</original>
    <variation>G</variation>
    <location>
        <position position="878"/>
    </location>
</feature>
<feature type="sequence variant" id="VAR_089065" description="In DA12; uncertain significance." evidence="13">
    <original>C</original>
    <variation>W</variation>
    <location>
        <position position="905"/>
    </location>
</feature>
<comment type="function">
    <text evidence="2">Metalloprotease which has proteolytic activity against the proteoglycan VCAN, cleaving it at the 'Glu-1428-|-1429-Ala' site. Cleaves VCAN in the pericellular matrix surrounding myoblasts, facilitating myoblast contact and fusion which is required for skeletal muscle development and regeneration.</text>
</comment>
<comment type="cofactor">
    <cofactor evidence="4">
        <name>Zn(2+)</name>
        <dbReference type="ChEBI" id="CHEBI:29105"/>
    </cofactor>
    <text evidence="4">Binds 1 zinc ion per subunit.</text>
</comment>
<comment type="subcellular location">
    <subcellularLocation>
        <location evidence="2">Secreted</location>
        <location evidence="2">Extracellular space</location>
        <location evidence="2">Extracellular matrix</location>
    </subcellularLocation>
    <subcellularLocation>
        <location evidence="2">Cell surface</location>
    </subcellularLocation>
</comment>
<comment type="tissue specificity">
    <text evidence="11">Expressed in fetal liver and kidney, but not in any of the adult tissues examined.</text>
</comment>
<comment type="domain">
    <text evidence="1">The spacer domain and the TSP type-1 domains are important for a tight interaction with the extracellular matrix.</text>
</comment>
<comment type="domain">
    <text>The conserved cysteine present in the cysteine-switch motif binds the catalytic zinc ion, thus inhibiting the enzyme. The dissociation of the cysteine from the zinc ion upon the activation-peptide release activates the enzyme.</text>
</comment>
<comment type="PTM">
    <text evidence="2">The precursor is cleaved by a furin endopeptidase.</text>
</comment>
<comment type="PTM">
    <text evidence="3">Glycosylated. Can be O-fucosylated by POFUT2 on a serine or a threonine residue found within the consensus sequence C1-X(2)-(S/T)-C2-G of the TSP type-1 repeat domains where C1 and C2 are the first and second cysteine residue of the repeat, respectively. Fucosylated repeats can then be further glycosylated by the addition of a beta-1,3-glucose residue by the glucosyltransferase, B3GALTL. Fucosylation mediates the efficient secretion of ADAMTS family members. Can be C-glycosylated with one or two mannose molecules on tryptophan residues within the consensus sequence W-X-X-W of the TPRs. Also N-glycosylated. These other glycosylations can also facilitate secretion.</text>
</comment>
<comment type="disease" evidence="13">
    <disease id="DI-06779">
        <name>Arthrogryposis, distal, 12</name>
        <acronym>DA12</acronym>
        <description>A form of distal arthrogryposis, a disease characterized by congenital joint contractures that mainly involve two or more distal parts of the limbs, in the absence of a primary neurological or muscle disease. DA12 is an autosomal recessive form characterized by congenital contractures, primarily affecting the small joints of the fingers and toes. Additional features include knee, Achilles tendon, and toe contractures, spinal stiffness, scoliosis, and orthodontic abnormalities.</description>
        <dbReference type="MIM" id="620545"/>
    </disease>
    <text>The disease is caused by variants affecting the gene represented in this entry.</text>
</comment>
<dbReference type="EC" id="3.4.24.-"/>
<dbReference type="EMBL" id="AJ315733">
    <property type="protein sequence ID" value="CAC86014.1"/>
    <property type="molecule type" value="mRNA"/>
</dbReference>
<dbReference type="EMBL" id="BC109114">
    <property type="protein sequence ID" value="AAI09115.1"/>
    <property type="molecule type" value="mRNA"/>
</dbReference>
<dbReference type="CCDS" id="CCDS8488.1"/>
<dbReference type="RefSeq" id="NP_620686.1">
    <property type="nucleotide sequence ID" value="NM_139055.4"/>
</dbReference>
<dbReference type="SMR" id="Q8TE58"/>
<dbReference type="BioGRID" id="128081">
    <property type="interactions" value="9"/>
</dbReference>
<dbReference type="FunCoup" id="Q8TE58">
    <property type="interactions" value="34"/>
</dbReference>
<dbReference type="IntAct" id="Q8TE58">
    <property type="interactions" value="4"/>
</dbReference>
<dbReference type="STRING" id="9606.ENSP00000299164"/>
<dbReference type="MEROPS" id="M12.025"/>
<dbReference type="GlyCosmos" id="Q8TE58">
    <property type="glycosylation" value="4 sites, No reported glycans"/>
</dbReference>
<dbReference type="GlyGen" id="Q8TE58">
    <property type="glycosylation" value="5 sites, 2 N-linked glycans (3 sites)"/>
</dbReference>
<dbReference type="iPTMnet" id="Q8TE58"/>
<dbReference type="PhosphoSitePlus" id="Q8TE58"/>
<dbReference type="BioMuta" id="ADAMTS15"/>
<dbReference type="DMDM" id="48474504"/>
<dbReference type="jPOST" id="Q8TE58"/>
<dbReference type="MassIVE" id="Q8TE58"/>
<dbReference type="PaxDb" id="9606-ENSP00000299164"/>
<dbReference type="PeptideAtlas" id="Q8TE58"/>
<dbReference type="ProteomicsDB" id="74400"/>
<dbReference type="Antibodypedia" id="33110">
    <property type="antibodies" value="136 antibodies from 21 providers"/>
</dbReference>
<dbReference type="DNASU" id="170689"/>
<dbReference type="Ensembl" id="ENST00000299164.4">
    <property type="protein sequence ID" value="ENSP00000299164.2"/>
    <property type="gene ID" value="ENSG00000166106.4"/>
</dbReference>
<dbReference type="GeneID" id="170689"/>
<dbReference type="KEGG" id="hsa:170689"/>
<dbReference type="MANE-Select" id="ENST00000299164.4">
    <property type="protein sequence ID" value="ENSP00000299164.2"/>
    <property type="RefSeq nucleotide sequence ID" value="NM_139055.4"/>
    <property type="RefSeq protein sequence ID" value="NP_620686.1"/>
</dbReference>
<dbReference type="UCSC" id="uc010scd.3">
    <property type="organism name" value="human"/>
</dbReference>
<dbReference type="AGR" id="HGNC:16305"/>
<dbReference type="CTD" id="170689"/>
<dbReference type="DisGeNET" id="170689"/>
<dbReference type="GeneCards" id="ADAMTS15"/>
<dbReference type="HGNC" id="HGNC:16305">
    <property type="gene designation" value="ADAMTS15"/>
</dbReference>
<dbReference type="HPA" id="ENSG00000166106">
    <property type="expression patterns" value="Tissue enhanced (adipose)"/>
</dbReference>
<dbReference type="MalaCards" id="ADAMTS15"/>
<dbReference type="MIM" id="607509">
    <property type="type" value="gene"/>
</dbReference>
<dbReference type="MIM" id="620545">
    <property type="type" value="phenotype"/>
</dbReference>
<dbReference type="neXtProt" id="NX_Q8TE58"/>
<dbReference type="OpenTargets" id="ENSG00000166106"/>
<dbReference type="PharmGKB" id="PA24541"/>
<dbReference type="VEuPathDB" id="HostDB:ENSG00000166106"/>
<dbReference type="eggNOG" id="KOG3538">
    <property type="taxonomic scope" value="Eukaryota"/>
</dbReference>
<dbReference type="GeneTree" id="ENSGT00940000155801"/>
<dbReference type="HOGENOM" id="CLU_000660_3_0_1"/>
<dbReference type="InParanoid" id="Q8TE58"/>
<dbReference type="OMA" id="LARDRCN"/>
<dbReference type="OrthoDB" id="412680at2759"/>
<dbReference type="PAN-GO" id="Q8TE58">
    <property type="GO annotations" value="3 GO annotations based on evolutionary models"/>
</dbReference>
<dbReference type="PhylomeDB" id="Q8TE58"/>
<dbReference type="TreeFam" id="TF331949"/>
<dbReference type="BRENDA" id="3.4.24.B12">
    <property type="organism ID" value="2681"/>
</dbReference>
<dbReference type="PathwayCommons" id="Q8TE58"/>
<dbReference type="Reactome" id="R-HSA-5083635">
    <property type="pathway name" value="Defective B3GALTL causes PpS"/>
</dbReference>
<dbReference type="Reactome" id="R-HSA-5173214">
    <property type="pathway name" value="O-glycosylation of TSR domain-containing proteins"/>
</dbReference>
<dbReference type="BioGRID-ORCS" id="170689">
    <property type="hits" value="7 hits in 1149 CRISPR screens"/>
</dbReference>
<dbReference type="ChiTaRS" id="ADAMTS15">
    <property type="organism name" value="human"/>
</dbReference>
<dbReference type="GenomeRNAi" id="170689"/>
<dbReference type="Pharos" id="Q8TE58">
    <property type="development level" value="Tbio"/>
</dbReference>
<dbReference type="PRO" id="PR:Q8TE58"/>
<dbReference type="Proteomes" id="UP000005640">
    <property type="component" value="Chromosome 11"/>
</dbReference>
<dbReference type="RNAct" id="Q8TE58">
    <property type="molecule type" value="protein"/>
</dbReference>
<dbReference type="Bgee" id="ENSG00000166106">
    <property type="expression patterns" value="Expressed in decidua and 120 other cell types or tissues"/>
</dbReference>
<dbReference type="GO" id="GO:0009986">
    <property type="term" value="C:cell surface"/>
    <property type="evidence" value="ECO:0007669"/>
    <property type="project" value="UniProtKB-SubCell"/>
</dbReference>
<dbReference type="GO" id="GO:0031012">
    <property type="term" value="C:extracellular matrix"/>
    <property type="evidence" value="ECO:0000318"/>
    <property type="project" value="GO_Central"/>
</dbReference>
<dbReference type="GO" id="GO:0005615">
    <property type="term" value="C:extracellular space"/>
    <property type="evidence" value="ECO:0007669"/>
    <property type="project" value="Ensembl"/>
</dbReference>
<dbReference type="GO" id="GO:0004175">
    <property type="term" value="F:endopeptidase activity"/>
    <property type="evidence" value="ECO:0000250"/>
    <property type="project" value="UniProtKB"/>
</dbReference>
<dbReference type="GO" id="GO:0050840">
    <property type="term" value="F:extracellular matrix binding"/>
    <property type="evidence" value="ECO:0007669"/>
    <property type="project" value="Ensembl"/>
</dbReference>
<dbReference type="GO" id="GO:0008201">
    <property type="term" value="F:heparin binding"/>
    <property type="evidence" value="ECO:0007669"/>
    <property type="project" value="Ensembl"/>
</dbReference>
<dbReference type="GO" id="GO:0004222">
    <property type="term" value="F:metalloendopeptidase activity"/>
    <property type="evidence" value="ECO:0000318"/>
    <property type="project" value="GO_Central"/>
</dbReference>
<dbReference type="GO" id="GO:0008270">
    <property type="term" value="F:zinc ion binding"/>
    <property type="evidence" value="ECO:0007669"/>
    <property type="project" value="InterPro"/>
</dbReference>
<dbReference type="GO" id="GO:0022617">
    <property type="term" value="P:extracellular matrix disassembly"/>
    <property type="evidence" value="ECO:0000250"/>
    <property type="project" value="UniProtKB"/>
</dbReference>
<dbReference type="GO" id="GO:0030198">
    <property type="term" value="P:extracellular matrix organization"/>
    <property type="evidence" value="ECO:0000318"/>
    <property type="project" value="GO_Central"/>
</dbReference>
<dbReference type="GO" id="GO:0007520">
    <property type="term" value="P:myoblast fusion"/>
    <property type="evidence" value="ECO:0000250"/>
    <property type="project" value="UniProtKB"/>
</dbReference>
<dbReference type="GO" id="GO:0006508">
    <property type="term" value="P:proteolysis"/>
    <property type="evidence" value="ECO:0000318"/>
    <property type="project" value="GO_Central"/>
</dbReference>
<dbReference type="CDD" id="cd04273">
    <property type="entry name" value="ZnMc_ADAMTS_like"/>
    <property type="match status" value="1"/>
</dbReference>
<dbReference type="FunFam" id="2.20.100.10:FF:000006">
    <property type="entry name" value="A disintegrin and metalloproteinase with thrombospondin motifs 1"/>
    <property type="match status" value="1"/>
</dbReference>
<dbReference type="FunFam" id="2.60.120.830:FF:000001">
    <property type="entry name" value="A disintegrin and metalloproteinase with thrombospondin motifs 1"/>
    <property type="match status" value="1"/>
</dbReference>
<dbReference type="FunFam" id="3.40.390.10:FF:000001">
    <property type="entry name" value="A disintegrin and metalloproteinase with thrombospondin motifs 1"/>
    <property type="match status" value="1"/>
</dbReference>
<dbReference type="FunFam" id="2.20.100.10:FF:000005">
    <property type="entry name" value="ADAM metallopeptidase with thrombospondin type 1 motif 9"/>
    <property type="match status" value="1"/>
</dbReference>
<dbReference type="Gene3D" id="2.60.120.830">
    <property type="match status" value="1"/>
</dbReference>
<dbReference type="Gene3D" id="3.40.1620.60">
    <property type="match status" value="2"/>
</dbReference>
<dbReference type="Gene3D" id="3.40.390.10">
    <property type="entry name" value="Collagenase (Catalytic Domain)"/>
    <property type="match status" value="1"/>
</dbReference>
<dbReference type="Gene3D" id="2.20.100.10">
    <property type="entry name" value="Thrombospondin type-1 (TSP1) repeat"/>
    <property type="match status" value="3"/>
</dbReference>
<dbReference type="InterPro" id="IPR006586">
    <property type="entry name" value="ADAM_Cys-rich"/>
</dbReference>
<dbReference type="InterPro" id="IPR013273">
    <property type="entry name" value="ADAMTS/ADAMTS-like"/>
</dbReference>
<dbReference type="InterPro" id="IPR050439">
    <property type="entry name" value="ADAMTS_ADAMTS-like"/>
</dbReference>
<dbReference type="InterPro" id="IPR041645">
    <property type="entry name" value="ADAMTS_CR_2"/>
</dbReference>
<dbReference type="InterPro" id="IPR045371">
    <property type="entry name" value="ADAMTS_CR_3"/>
</dbReference>
<dbReference type="InterPro" id="IPR010294">
    <property type="entry name" value="ADAMTS_spacer1"/>
</dbReference>
<dbReference type="InterPro" id="IPR024079">
    <property type="entry name" value="MetalloPept_cat_dom_sf"/>
</dbReference>
<dbReference type="InterPro" id="IPR013277">
    <property type="entry name" value="Pept_M12B_ADAM-TS8"/>
</dbReference>
<dbReference type="InterPro" id="IPR001590">
    <property type="entry name" value="Peptidase_M12B"/>
</dbReference>
<dbReference type="InterPro" id="IPR002870">
    <property type="entry name" value="Peptidase_M12B_N"/>
</dbReference>
<dbReference type="InterPro" id="IPR000884">
    <property type="entry name" value="TSP1_rpt"/>
</dbReference>
<dbReference type="InterPro" id="IPR036383">
    <property type="entry name" value="TSP1_rpt_sf"/>
</dbReference>
<dbReference type="PANTHER" id="PTHR13723:SF39">
    <property type="entry name" value="A DISINTEGRIN AND METALLOPROTEINASE WITH THROMBOSPONDIN MOTIFS 15"/>
    <property type="match status" value="1"/>
</dbReference>
<dbReference type="PANTHER" id="PTHR13723">
    <property type="entry name" value="ADAMTS A DISINTEGRIN AND METALLOPROTEASE WITH THROMBOSPONDIN MOTIFS PROTEASE"/>
    <property type="match status" value="1"/>
</dbReference>
<dbReference type="Pfam" id="PF17771">
    <property type="entry name" value="ADAMTS_CR_2"/>
    <property type="match status" value="1"/>
</dbReference>
<dbReference type="Pfam" id="PF19236">
    <property type="entry name" value="ADAMTS_CR_3"/>
    <property type="match status" value="1"/>
</dbReference>
<dbReference type="Pfam" id="PF05986">
    <property type="entry name" value="ADAMTS_spacer1"/>
    <property type="match status" value="1"/>
</dbReference>
<dbReference type="Pfam" id="PF01562">
    <property type="entry name" value="Pep_M12B_propep"/>
    <property type="match status" value="1"/>
</dbReference>
<dbReference type="Pfam" id="PF01421">
    <property type="entry name" value="Reprolysin"/>
    <property type="match status" value="1"/>
</dbReference>
<dbReference type="Pfam" id="PF19030">
    <property type="entry name" value="TSP1_ADAMTS"/>
    <property type="match status" value="2"/>
</dbReference>
<dbReference type="Pfam" id="PF00090">
    <property type="entry name" value="TSP_1"/>
    <property type="match status" value="1"/>
</dbReference>
<dbReference type="PRINTS" id="PR01861">
    <property type="entry name" value="ADAMTS8"/>
</dbReference>
<dbReference type="PRINTS" id="PR01857">
    <property type="entry name" value="ADAMTSFAMILY"/>
</dbReference>
<dbReference type="SMART" id="SM00608">
    <property type="entry name" value="ACR"/>
    <property type="match status" value="1"/>
</dbReference>
<dbReference type="SMART" id="SM00209">
    <property type="entry name" value="TSP1"/>
    <property type="match status" value="3"/>
</dbReference>
<dbReference type="SUPFAM" id="SSF55486">
    <property type="entry name" value="Metalloproteases ('zincins'), catalytic domain"/>
    <property type="match status" value="1"/>
</dbReference>
<dbReference type="SUPFAM" id="SSF82895">
    <property type="entry name" value="TSP-1 type 1 repeat"/>
    <property type="match status" value="3"/>
</dbReference>
<dbReference type="PROSITE" id="PS50215">
    <property type="entry name" value="ADAM_MEPRO"/>
    <property type="match status" value="1"/>
</dbReference>
<dbReference type="PROSITE" id="PS50092">
    <property type="entry name" value="TSP1"/>
    <property type="match status" value="3"/>
</dbReference>
<dbReference type="PROSITE" id="PS00142">
    <property type="entry name" value="ZINC_PROTEASE"/>
    <property type="match status" value="1"/>
</dbReference>